<organism>
    <name type="scientific">Clavibacter michiganensis subsp. michiganensis (strain NCPPB 382)</name>
    <dbReference type="NCBI Taxonomy" id="443906"/>
    <lineage>
        <taxon>Bacteria</taxon>
        <taxon>Bacillati</taxon>
        <taxon>Actinomycetota</taxon>
        <taxon>Actinomycetes</taxon>
        <taxon>Micrococcales</taxon>
        <taxon>Microbacteriaceae</taxon>
        <taxon>Clavibacter</taxon>
    </lineage>
</organism>
<feature type="chain" id="PRO_0000310105" description="Probable nicotinate-nucleotide adenylyltransferase">
    <location>
        <begin position="1"/>
        <end position="200"/>
    </location>
</feature>
<comment type="function">
    <text evidence="1">Catalyzes the reversible adenylation of nicotinate mononucleotide (NaMN) to nicotinic acid adenine dinucleotide (NaAD).</text>
</comment>
<comment type="catalytic activity">
    <reaction evidence="1">
        <text>nicotinate beta-D-ribonucleotide + ATP + H(+) = deamido-NAD(+) + diphosphate</text>
        <dbReference type="Rhea" id="RHEA:22860"/>
        <dbReference type="ChEBI" id="CHEBI:15378"/>
        <dbReference type="ChEBI" id="CHEBI:30616"/>
        <dbReference type="ChEBI" id="CHEBI:33019"/>
        <dbReference type="ChEBI" id="CHEBI:57502"/>
        <dbReference type="ChEBI" id="CHEBI:58437"/>
        <dbReference type="EC" id="2.7.7.18"/>
    </reaction>
</comment>
<comment type="pathway">
    <text evidence="1">Cofactor biosynthesis; NAD(+) biosynthesis; deamido-NAD(+) from nicotinate D-ribonucleotide: step 1/1.</text>
</comment>
<comment type="similarity">
    <text evidence="1">Belongs to the NadD family.</text>
</comment>
<protein>
    <recommendedName>
        <fullName evidence="1">Probable nicotinate-nucleotide adenylyltransferase</fullName>
        <ecNumber evidence="1">2.7.7.18</ecNumber>
    </recommendedName>
    <alternativeName>
        <fullName evidence="1">Deamido-NAD(+) diphosphorylase</fullName>
    </alternativeName>
    <alternativeName>
        <fullName evidence="1">Deamido-NAD(+) pyrophosphorylase</fullName>
    </alternativeName>
    <alternativeName>
        <fullName evidence="1">Nicotinate mononucleotide adenylyltransferase</fullName>
        <shortName evidence="1">NaMN adenylyltransferase</shortName>
    </alternativeName>
</protein>
<accession>A5CR36</accession>
<name>NADD_CLAM3</name>
<dbReference type="EC" id="2.7.7.18" evidence="1"/>
<dbReference type="EMBL" id="AM711867">
    <property type="protein sequence ID" value="CAN01541.1"/>
    <property type="molecule type" value="Genomic_DNA"/>
</dbReference>
<dbReference type="RefSeq" id="WP_012038181.1">
    <property type="nucleotide sequence ID" value="NC_009480.1"/>
</dbReference>
<dbReference type="SMR" id="A5CR36"/>
<dbReference type="GeneID" id="92947472"/>
<dbReference type="KEGG" id="cmi:CMM_1495"/>
<dbReference type="eggNOG" id="COG1057">
    <property type="taxonomic scope" value="Bacteria"/>
</dbReference>
<dbReference type="HOGENOM" id="CLU_069765_1_1_11"/>
<dbReference type="OrthoDB" id="5295945at2"/>
<dbReference type="UniPathway" id="UPA00253">
    <property type="reaction ID" value="UER00332"/>
</dbReference>
<dbReference type="Proteomes" id="UP000001564">
    <property type="component" value="Chromosome"/>
</dbReference>
<dbReference type="GO" id="GO:0005524">
    <property type="term" value="F:ATP binding"/>
    <property type="evidence" value="ECO:0007669"/>
    <property type="project" value="UniProtKB-KW"/>
</dbReference>
<dbReference type="GO" id="GO:0004515">
    <property type="term" value="F:nicotinate-nucleotide adenylyltransferase activity"/>
    <property type="evidence" value="ECO:0007669"/>
    <property type="project" value="UniProtKB-UniRule"/>
</dbReference>
<dbReference type="GO" id="GO:0009435">
    <property type="term" value="P:NAD biosynthetic process"/>
    <property type="evidence" value="ECO:0007669"/>
    <property type="project" value="UniProtKB-UniRule"/>
</dbReference>
<dbReference type="CDD" id="cd02165">
    <property type="entry name" value="NMNAT"/>
    <property type="match status" value="1"/>
</dbReference>
<dbReference type="FunFam" id="3.40.50.620:FF:000039">
    <property type="entry name" value="Probable nicotinate-nucleotide adenylyltransferase"/>
    <property type="match status" value="1"/>
</dbReference>
<dbReference type="Gene3D" id="3.40.50.620">
    <property type="entry name" value="HUPs"/>
    <property type="match status" value="1"/>
</dbReference>
<dbReference type="HAMAP" id="MF_00244">
    <property type="entry name" value="NaMN_adenylyltr"/>
    <property type="match status" value="1"/>
</dbReference>
<dbReference type="InterPro" id="IPR004821">
    <property type="entry name" value="Cyt_trans-like"/>
</dbReference>
<dbReference type="InterPro" id="IPR005248">
    <property type="entry name" value="NadD/NMNAT"/>
</dbReference>
<dbReference type="InterPro" id="IPR014729">
    <property type="entry name" value="Rossmann-like_a/b/a_fold"/>
</dbReference>
<dbReference type="NCBIfam" id="TIGR00125">
    <property type="entry name" value="cyt_tran_rel"/>
    <property type="match status" value="1"/>
</dbReference>
<dbReference type="NCBIfam" id="TIGR00482">
    <property type="entry name" value="nicotinate (nicotinamide) nucleotide adenylyltransferase"/>
    <property type="match status" value="1"/>
</dbReference>
<dbReference type="NCBIfam" id="NF000840">
    <property type="entry name" value="PRK00071.1-3"/>
    <property type="match status" value="1"/>
</dbReference>
<dbReference type="PANTHER" id="PTHR39321">
    <property type="entry name" value="NICOTINATE-NUCLEOTIDE ADENYLYLTRANSFERASE-RELATED"/>
    <property type="match status" value="1"/>
</dbReference>
<dbReference type="PANTHER" id="PTHR39321:SF3">
    <property type="entry name" value="PHOSPHOPANTETHEINE ADENYLYLTRANSFERASE"/>
    <property type="match status" value="1"/>
</dbReference>
<dbReference type="Pfam" id="PF01467">
    <property type="entry name" value="CTP_transf_like"/>
    <property type="match status" value="1"/>
</dbReference>
<dbReference type="SUPFAM" id="SSF52374">
    <property type="entry name" value="Nucleotidylyl transferase"/>
    <property type="match status" value="1"/>
</dbReference>
<reference key="1">
    <citation type="journal article" date="2008" name="J. Bacteriol.">
        <title>The genome sequence of the tomato-pathogenic actinomycete Clavibacter michiganensis subsp. michiganensis NCPPB382 reveals a large island involved in pathogenicity.</title>
        <authorList>
            <person name="Gartemann K.-H."/>
            <person name="Abt B."/>
            <person name="Bekel T."/>
            <person name="Burger A."/>
            <person name="Engemann J."/>
            <person name="Fluegel M."/>
            <person name="Gaigalat L."/>
            <person name="Goesmann A."/>
            <person name="Graefen I."/>
            <person name="Kalinowski J."/>
            <person name="Kaup O."/>
            <person name="Kirchner O."/>
            <person name="Krause L."/>
            <person name="Linke B."/>
            <person name="McHardy A."/>
            <person name="Meyer F."/>
            <person name="Pohle S."/>
            <person name="Rueckert C."/>
            <person name="Schneiker S."/>
            <person name="Zellermann E.-M."/>
            <person name="Puehler A."/>
            <person name="Eichenlaub R."/>
            <person name="Kaiser O."/>
            <person name="Bartels D."/>
        </authorList>
    </citation>
    <scope>NUCLEOTIDE SEQUENCE [LARGE SCALE GENOMIC DNA]</scope>
    <source>
        <strain>NCPPB 382</strain>
    </source>
</reference>
<gene>
    <name evidence="1" type="primary">nadD</name>
    <name type="ordered locus">CMM_1495</name>
</gene>
<sequence>MTTPAAPRLRIGVMGGTFDPIHNGHLVAASEVQQHLQLDEVIFVPTGQPWQKQTVTDGEHRYLMTVIATAANPRFTVSRVDIDRAGTTYTIDTLRDIRRTHPDAELFFITGADAIQQILGWKDVAELWDLAHFVAVTRPGHDLTESGLPHADVRLLEVPALAISSTDCRARVGRGFPVWYLVPDGVVQYISKHHLYRSPQ</sequence>
<proteinExistence type="inferred from homology"/>
<keyword id="KW-0067">ATP-binding</keyword>
<keyword id="KW-0520">NAD</keyword>
<keyword id="KW-0547">Nucleotide-binding</keyword>
<keyword id="KW-0548">Nucleotidyltransferase</keyword>
<keyword id="KW-0662">Pyridine nucleotide biosynthesis</keyword>
<keyword id="KW-0808">Transferase</keyword>
<evidence type="ECO:0000255" key="1">
    <source>
        <dbReference type="HAMAP-Rule" id="MF_00244"/>
    </source>
</evidence>